<evidence type="ECO:0000250" key="1">
    <source>
        <dbReference type="UniProtKB" id="C9JLW8"/>
    </source>
</evidence>
<evidence type="ECO:0000256" key="2">
    <source>
        <dbReference type="SAM" id="MobiDB-lite"/>
    </source>
</evidence>
<evidence type="ECO:0000305" key="3"/>
<sequence length="96" mass="10786">MASSPVSRVVYNGKRSGGPRSPGAGSEIFTPAHEENVRFIYEAWQCVERDLRSQMGSERGLVEEYVEKMPNPSLKAFKPVDLSDLKRRNTQDAKKS</sequence>
<proteinExistence type="inferred from homology"/>
<reference key="1">
    <citation type="journal article" date="2005" name="Genome Biol.">
        <title>Full-length cDNAs from chicken bursal lymphocytes to facilitate gene function analysis.</title>
        <authorList>
            <person name="Caldwell R.B."/>
            <person name="Kierzek A.M."/>
            <person name="Arakawa H."/>
            <person name="Bezzubov Y."/>
            <person name="Zaim J."/>
            <person name="Fiedler P."/>
            <person name="Kutter S."/>
            <person name="Blagodatski A."/>
            <person name="Kostovska D."/>
            <person name="Koter M."/>
            <person name="Plachy J."/>
            <person name="Carninci P."/>
            <person name="Hayashizaki Y."/>
            <person name="Buerstedde J.-M."/>
        </authorList>
    </citation>
    <scope>NUCLEOTIDE SEQUENCE [LARGE SCALE MRNA]</scope>
    <source>
        <strain>CB</strain>
        <tissue>Bursa of Fabricius</tissue>
    </source>
</reference>
<protein>
    <recommendedName>
        <fullName>Mapk-regulated corepressor-interacting protein 1</fullName>
    </recommendedName>
    <alternativeName>
        <fullName>Protein FAM195B</fullName>
    </alternativeName>
</protein>
<name>MCRI1_CHICK</name>
<feature type="chain" id="PRO_0000393957" description="Mapk-regulated corepressor-interacting protein 1">
    <location>
        <begin position="1"/>
        <end position="96"/>
    </location>
</feature>
<feature type="region of interest" description="Disordered" evidence="2">
    <location>
        <begin position="1"/>
        <end position="28"/>
    </location>
</feature>
<feature type="region of interest" description="Disordered" evidence="2">
    <location>
        <begin position="76"/>
        <end position="96"/>
    </location>
</feature>
<feature type="short sequence motif" description="PXDLS motif" evidence="3">
    <location>
        <begin position="79"/>
        <end position="83"/>
    </location>
</feature>
<feature type="compositionally biased region" description="Basic and acidic residues" evidence="2">
    <location>
        <begin position="81"/>
        <end position="96"/>
    </location>
</feature>
<keyword id="KW-0963">Cytoplasm</keyword>
<keyword id="KW-0539">Nucleus</keyword>
<keyword id="KW-1185">Reference proteome</keyword>
<accession>Q5ZIU1</accession>
<dbReference type="EMBL" id="AJ720693">
    <property type="protein sequence ID" value="CAG32352.1"/>
    <property type="molecule type" value="mRNA"/>
</dbReference>
<dbReference type="RefSeq" id="NP_001292004.1">
    <property type="nucleotide sequence ID" value="NM_001305075.1"/>
</dbReference>
<dbReference type="RefSeq" id="NP_001292005.1">
    <property type="nucleotide sequence ID" value="NM_001305076.2"/>
</dbReference>
<dbReference type="RefSeq" id="XP_015150856.1">
    <property type="nucleotide sequence ID" value="XM_015295370.4"/>
</dbReference>
<dbReference type="RefSeq" id="XP_015150857.1">
    <property type="nucleotide sequence ID" value="XM_015295371.4"/>
</dbReference>
<dbReference type="RefSeq" id="XP_015150858.1">
    <property type="nucleotide sequence ID" value="XM_015295372.1"/>
</dbReference>
<dbReference type="RefSeq" id="XP_040505383.1">
    <property type="nucleotide sequence ID" value="XM_040649449.2"/>
</dbReference>
<dbReference type="RefSeq" id="XP_046785193.1">
    <property type="nucleotide sequence ID" value="XM_046929237.1"/>
</dbReference>
<dbReference type="RefSeq" id="XP_046785194.1">
    <property type="nucleotide sequence ID" value="XM_046929238.1"/>
</dbReference>
<dbReference type="RefSeq" id="XP_046785195.1">
    <property type="nucleotide sequence ID" value="XM_046929239.1"/>
</dbReference>
<dbReference type="SMR" id="Q5ZIU1"/>
<dbReference type="FunCoup" id="Q5ZIU1">
    <property type="interactions" value="287"/>
</dbReference>
<dbReference type="STRING" id="9031.ENSGALP00000044582"/>
<dbReference type="GeneID" id="101749776"/>
<dbReference type="KEGG" id="gga:101749776"/>
<dbReference type="CTD" id="348262"/>
<dbReference type="VEuPathDB" id="HostDB:geneid_101749776"/>
<dbReference type="InParanoid" id="Q5ZIU1"/>
<dbReference type="OMA" id="PQNHERN"/>
<dbReference type="OrthoDB" id="8170061at2759"/>
<dbReference type="PhylomeDB" id="Q5ZIU1"/>
<dbReference type="PRO" id="PR:Q5ZIU1"/>
<dbReference type="Proteomes" id="UP000000539">
    <property type="component" value="Chromosome 18"/>
</dbReference>
<dbReference type="Bgee" id="ENSGALG00000042814">
    <property type="expression patterns" value="Expressed in spermatid and 13 other cell types or tissues"/>
</dbReference>
<dbReference type="GO" id="GO:0005737">
    <property type="term" value="C:cytoplasm"/>
    <property type="evidence" value="ECO:0000250"/>
    <property type="project" value="UniProtKB"/>
</dbReference>
<dbReference type="GO" id="GO:0010494">
    <property type="term" value="C:cytoplasmic stress granule"/>
    <property type="evidence" value="ECO:0000250"/>
    <property type="project" value="UniProtKB"/>
</dbReference>
<dbReference type="GO" id="GO:0005634">
    <property type="term" value="C:nucleus"/>
    <property type="evidence" value="ECO:0000250"/>
    <property type="project" value="UniProtKB"/>
</dbReference>
<dbReference type="GO" id="GO:0010717">
    <property type="term" value="P:regulation of epithelial to mesenchymal transition"/>
    <property type="evidence" value="ECO:0000250"/>
    <property type="project" value="UniProtKB"/>
</dbReference>
<dbReference type="InterPro" id="IPR029428">
    <property type="entry name" value="MCRIP"/>
</dbReference>
<dbReference type="Pfam" id="PF14799">
    <property type="entry name" value="FAM195"/>
    <property type="match status" value="1"/>
</dbReference>
<comment type="function">
    <text evidence="1">May play a role in the regulation of the epithelial-mesenchymal transition.</text>
</comment>
<comment type="subcellular location">
    <subcellularLocation>
        <location evidence="1">Nucleus</location>
    </subcellularLocation>
    <subcellularLocation>
        <location evidence="1">Cytoplasm</location>
        <location evidence="1">Stress granule</location>
    </subcellularLocation>
</comment>
<comment type="similarity">
    <text evidence="3">Belongs to the MCRIP family.</text>
</comment>
<gene>
    <name type="primary">MCRIP1</name>
    <name type="synonym">FAM195B</name>
    <name type="ORF">RCJMB04_23i24</name>
</gene>
<organism>
    <name type="scientific">Gallus gallus</name>
    <name type="common">Chicken</name>
    <dbReference type="NCBI Taxonomy" id="9031"/>
    <lineage>
        <taxon>Eukaryota</taxon>
        <taxon>Metazoa</taxon>
        <taxon>Chordata</taxon>
        <taxon>Craniata</taxon>
        <taxon>Vertebrata</taxon>
        <taxon>Euteleostomi</taxon>
        <taxon>Archelosauria</taxon>
        <taxon>Archosauria</taxon>
        <taxon>Dinosauria</taxon>
        <taxon>Saurischia</taxon>
        <taxon>Theropoda</taxon>
        <taxon>Coelurosauria</taxon>
        <taxon>Aves</taxon>
        <taxon>Neognathae</taxon>
        <taxon>Galloanserae</taxon>
        <taxon>Galliformes</taxon>
        <taxon>Phasianidae</taxon>
        <taxon>Phasianinae</taxon>
        <taxon>Gallus</taxon>
    </lineage>
</organism>